<organism>
    <name type="scientific">Cenarchaeum symbiosum (strain A)</name>
    <dbReference type="NCBI Taxonomy" id="414004"/>
    <lineage>
        <taxon>Archaea</taxon>
        <taxon>Nitrososphaerota</taxon>
        <taxon>Candidatus Cenarchaeales</taxon>
        <taxon>Candidatus Cenarchaeaceae</taxon>
        <taxon>Candidatus Cenarchaeum</taxon>
    </lineage>
</organism>
<accession>A0RX07</accession>
<keyword id="KW-1185">Reference proteome</keyword>
<keyword id="KW-0678">Repressor</keyword>
<keyword id="KW-0687">Ribonucleoprotein</keyword>
<keyword id="KW-0689">Ribosomal protein</keyword>
<keyword id="KW-0694">RNA-binding</keyword>
<keyword id="KW-0699">rRNA-binding</keyword>
<keyword id="KW-0810">Translation regulation</keyword>
<keyword id="KW-0820">tRNA-binding</keyword>
<name>RL1_CENSY</name>
<sequence length="215" mass="23541">MVDEAEVARMIKKAKEGDKRNFTQTLEFIMVFKDIDIKKGFAINETVQLPKTSSPSTVCVLASGDMGVRAKNAKADMVVDADGLEKLGTNKRESRKFINRYDFFLADTQLMPVVGKVLGQILGPRGKMPTPVAFNAPIESFLERFRSSVRVRARASLSLSCKIGDETMDDADLVANAMAVYGTVEKKLPQGSKNVRQIMVKTSMGSIVKQSGTVA</sequence>
<protein>
    <recommendedName>
        <fullName evidence="1">Large ribosomal subunit protein uL1</fullName>
    </recommendedName>
    <alternativeName>
        <fullName evidence="2">50S ribosomal protein L1</fullName>
    </alternativeName>
</protein>
<comment type="function">
    <text evidence="1">Binds directly to 23S rRNA. Probably involved in E site tRNA release.</text>
</comment>
<comment type="function">
    <text evidence="1">Protein L1 is also a translational repressor protein, it controls the translation of its operon by binding to its mRNA.</text>
</comment>
<comment type="subunit">
    <text evidence="1">Part of the 50S ribosomal subunit.</text>
</comment>
<comment type="similarity">
    <text evidence="1">Belongs to the universal ribosomal protein uL1 family.</text>
</comment>
<evidence type="ECO:0000255" key="1">
    <source>
        <dbReference type="HAMAP-Rule" id="MF_01318"/>
    </source>
</evidence>
<evidence type="ECO:0000305" key="2"/>
<proteinExistence type="inferred from homology"/>
<reference key="1">
    <citation type="journal article" date="2006" name="Proc. Natl. Acad. Sci. U.S.A.">
        <title>Genomic analysis of the uncultivated marine crenarchaeote Cenarchaeum symbiosum.</title>
        <authorList>
            <person name="Hallam S.J."/>
            <person name="Konstantinidis K.T."/>
            <person name="Putnam N."/>
            <person name="Schleper C."/>
            <person name="Watanabe Y."/>
            <person name="Sugahara J."/>
            <person name="Preston C."/>
            <person name="de la Torre J."/>
            <person name="Richardson P.M."/>
            <person name="DeLong E.F."/>
        </authorList>
    </citation>
    <scope>NUCLEOTIDE SEQUENCE [LARGE SCALE GENOMIC DNA]</scope>
    <source>
        <strain>A</strain>
    </source>
</reference>
<dbReference type="EMBL" id="DP000238">
    <property type="protein sequence ID" value="ABK77874.1"/>
    <property type="molecule type" value="Genomic_DNA"/>
</dbReference>
<dbReference type="SMR" id="A0RX07"/>
<dbReference type="STRING" id="414004.CENSYa_1251"/>
<dbReference type="EnsemblBacteria" id="ABK77874">
    <property type="protein sequence ID" value="ABK77874"/>
    <property type="gene ID" value="CENSYa_1251"/>
</dbReference>
<dbReference type="KEGG" id="csy:CENSYa_1251"/>
<dbReference type="PATRIC" id="fig|414004.10.peg.1138"/>
<dbReference type="HOGENOM" id="CLU_062853_4_0_2"/>
<dbReference type="Proteomes" id="UP000000758">
    <property type="component" value="Chromosome"/>
</dbReference>
<dbReference type="GO" id="GO:0015934">
    <property type="term" value="C:large ribosomal subunit"/>
    <property type="evidence" value="ECO:0007669"/>
    <property type="project" value="InterPro"/>
</dbReference>
<dbReference type="GO" id="GO:0019843">
    <property type="term" value="F:rRNA binding"/>
    <property type="evidence" value="ECO:0007669"/>
    <property type="project" value="UniProtKB-UniRule"/>
</dbReference>
<dbReference type="GO" id="GO:0003735">
    <property type="term" value="F:structural constituent of ribosome"/>
    <property type="evidence" value="ECO:0007669"/>
    <property type="project" value="InterPro"/>
</dbReference>
<dbReference type="GO" id="GO:0000049">
    <property type="term" value="F:tRNA binding"/>
    <property type="evidence" value="ECO:0007669"/>
    <property type="project" value="UniProtKB-KW"/>
</dbReference>
<dbReference type="GO" id="GO:0006417">
    <property type="term" value="P:regulation of translation"/>
    <property type="evidence" value="ECO:0007669"/>
    <property type="project" value="UniProtKB-KW"/>
</dbReference>
<dbReference type="GO" id="GO:0006412">
    <property type="term" value="P:translation"/>
    <property type="evidence" value="ECO:0007669"/>
    <property type="project" value="UniProtKB-UniRule"/>
</dbReference>
<dbReference type="CDD" id="cd00403">
    <property type="entry name" value="Ribosomal_L1"/>
    <property type="match status" value="1"/>
</dbReference>
<dbReference type="FunFam" id="3.40.50.790:FF:000005">
    <property type="entry name" value="50S ribosomal protein L1"/>
    <property type="match status" value="1"/>
</dbReference>
<dbReference type="Gene3D" id="3.30.190.20">
    <property type="match status" value="1"/>
</dbReference>
<dbReference type="Gene3D" id="3.40.50.790">
    <property type="match status" value="1"/>
</dbReference>
<dbReference type="HAMAP" id="MF_01318_A">
    <property type="entry name" value="Ribosomal_uL1_A"/>
    <property type="match status" value="1"/>
</dbReference>
<dbReference type="InterPro" id="IPR002143">
    <property type="entry name" value="Ribosomal_uL1"/>
</dbReference>
<dbReference type="InterPro" id="IPR023674">
    <property type="entry name" value="Ribosomal_uL1-like"/>
</dbReference>
<dbReference type="InterPro" id="IPR028364">
    <property type="entry name" value="Ribosomal_uL1/biogenesis"/>
</dbReference>
<dbReference type="InterPro" id="IPR016095">
    <property type="entry name" value="Ribosomal_uL1_3-a/b-sand"/>
</dbReference>
<dbReference type="InterPro" id="IPR023669">
    <property type="entry name" value="Ribosomal_uL1_arc"/>
</dbReference>
<dbReference type="InterPro" id="IPR023673">
    <property type="entry name" value="Ribosomal_uL1_CS"/>
</dbReference>
<dbReference type="NCBIfam" id="NF003244">
    <property type="entry name" value="PRK04203.1"/>
    <property type="match status" value="1"/>
</dbReference>
<dbReference type="PANTHER" id="PTHR36427">
    <property type="entry name" value="54S RIBOSOMAL PROTEIN L1, MITOCHONDRIAL"/>
    <property type="match status" value="1"/>
</dbReference>
<dbReference type="PANTHER" id="PTHR36427:SF3">
    <property type="entry name" value="LARGE RIBOSOMAL SUBUNIT PROTEIN UL1M"/>
    <property type="match status" value="1"/>
</dbReference>
<dbReference type="Pfam" id="PF00687">
    <property type="entry name" value="Ribosomal_L1"/>
    <property type="match status" value="1"/>
</dbReference>
<dbReference type="PIRSF" id="PIRSF002155">
    <property type="entry name" value="Ribosomal_L1"/>
    <property type="match status" value="1"/>
</dbReference>
<dbReference type="SUPFAM" id="SSF56808">
    <property type="entry name" value="Ribosomal protein L1"/>
    <property type="match status" value="1"/>
</dbReference>
<dbReference type="PROSITE" id="PS01199">
    <property type="entry name" value="RIBOSOMAL_L1"/>
    <property type="match status" value="1"/>
</dbReference>
<feature type="chain" id="PRO_0000307664" description="Large ribosomal subunit protein uL1">
    <location>
        <begin position="1"/>
        <end position="215"/>
    </location>
</feature>
<gene>
    <name evidence="1" type="primary">rpl1</name>
    <name type="ordered locus">CENSYa_1251</name>
</gene>